<sequence length="1426" mass="159725">MSGKPAARQGDMTQYGGPIVQGSAGVRIGAPTGVACSVCPGGMTSGNPVNPLLGAKVLPGETDLALPGPLPFILSRTYSSYRTKTPAPVGVFGPGWKAPSDIRLQLRDDGLILNDNGGRSIHFEPLLPGEAVYSRSESMWLVRGGKAAQPDGHTLARLWGALPPDIRLSPHLYLATNSAQGPWWILGWSERVPGAEDVLPAPLPPYRVLTGMADRFGRTLTYRREAAGDLAGEITGVTDGAGREFRLVLTTQAQRAEEARTSSLSSSDSSRPLSASAFPDTLPGTEYGPDRGIRLSAVWLMHDPAYPESLPAAPLVRYTYTEAGELLAVYDRSNTQVRAFTYDAQHPGRMVAHRYAGRPEMRYRYDDTGRVVEQLNPAGLSYRYLYEQDRITVTDSLNRREVLHTEGGAGLKRVVKKELADGSVTRSGYDAAGRLTAQTDAAGRRTEYGLNVVSGDITDITTPDGRETKFYYNDGNQLTAVVSPDGLESRREYDEPGRLVSETSRSGETVRYRYDDAHSELPATTTDATGSTRQMTWSRYGQLLAFTDCSGYQTRYEYDRFGQMTAVHREEGISLYRRYDNRGRLTSVKDAQGRETRYEYNAAGDLTAVITPDGNRSETQYDAWGKAVSTTQGGLTRSMEYDAAGRVISLTNENGSHSVFSYDALDRLVQQGGFDGRTQRYHYDLTGKLTQSEDEGLVILWYYDESDRITHRTVNGEPAEQWQYDGHGWLTDISHLSEGHRVAVHYGYDDKGRLTGECQTVENPETGELLWQHETKHAYNEQGLANRVTPDSLPPVEWLTYGSGYLAGMKLGGTPLVEYTRDRLHRETVRSFGSMAGSNAAYELTSTYTPAGQLQSQHLNSLVYDRDYGWSDNGDLVRISGPRQTREYGYSATGRLESVRTLAPDLDIRIPYATDPAGNRLPDPELHPDSTLTVWPDNRIAEDAHYVYRHDEYGRLTEKTDRIPAGVIRTDDERTHHYHYDSQHRLVFYTRIQHGEPLVESRYLYDPLGRRMAKRVWRRERDLTGWMSLSRKPEVTWYGWDGDRLTTVQTDTTRIQTVYEPGSFTPLIRVETENGEREKAQRRSLAETLQQEGSENGHGVVFPAELVRLLDRLEEEIRADRVSSESRAWLAQCGLTVEQLARQVEPEYTPARKAHLYHCDHRGLPLALISEDGNTAWSAEYDEWGNQLNEENPHHVYQPYRLPGQQHDEESGLYYNRHRYYDPLQGRYITQDPMGLKGGWNLYQYPLNPLQQIDPMGLLQTWDDARSGACTGGVCGVLSRIIGPSKFDSTADAALDALKETQNRSLCNDMEYSGIVCKDTNGKYFASKAETDNLRKESYPLKRKCPTGTDRVAAYHTHGADSHGDYVDEFFSSSDKNLVRSKDNNLEAFYLATPDGRFEALNNKGEYIFIRNSVPGLSSVCIPYHD</sequence>
<comment type="function">
    <text>Rhs elements have a nonessential function. They may play an important role in the natural ecology of the cell.</text>
</comment>
<comment type="induction">
    <text evidence="2">Repressed by H-NS, induced by LeuO. Part of the rhsD-ybbC operon.</text>
</comment>
<comment type="domain">
    <text>Each rhs appears to consist of a highly conserved 141 kDa amino fragment followed by a highly divergent C-terminus.</text>
</comment>
<comment type="similarity">
    <text evidence="3">Belongs to the RHS family.</text>
</comment>
<proteinExistence type="evidence at transcript level"/>
<protein>
    <recommendedName>
        <fullName>Protein RhsD</fullName>
    </recommendedName>
</protein>
<dbReference type="EMBL" id="X60999">
    <property type="protein sequence ID" value="CAA43314.1"/>
    <property type="molecule type" value="Genomic_DNA"/>
</dbReference>
<dbReference type="EMBL" id="U82664">
    <property type="protein sequence ID" value="AAB40251.1"/>
    <property type="molecule type" value="Genomic_DNA"/>
</dbReference>
<dbReference type="EMBL" id="U00096">
    <property type="protein sequence ID" value="AAC73599.1"/>
    <property type="molecule type" value="Genomic_DNA"/>
</dbReference>
<dbReference type="EMBL" id="AP009048">
    <property type="protein sequence ID" value="BAE76276.1"/>
    <property type="molecule type" value="Genomic_DNA"/>
</dbReference>
<dbReference type="EMBL" id="AH006360">
    <property type="protein sequence ID" value="AAC32467.1"/>
    <property type="molecule type" value="Genomic_DNA"/>
</dbReference>
<dbReference type="PIR" id="H64780">
    <property type="entry name" value="H64780"/>
</dbReference>
<dbReference type="RefSeq" id="NP_415030.1">
    <property type="nucleotide sequence ID" value="NC_000913.3"/>
</dbReference>
<dbReference type="RefSeq" id="WP_000014739.1">
    <property type="nucleotide sequence ID" value="NZ_CP064683.1"/>
</dbReference>
<dbReference type="SMR" id="P16919"/>
<dbReference type="BioGRID" id="4259865">
    <property type="interactions" value="319"/>
</dbReference>
<dbReference type="DIP" id="DIP-10702N"/>
<dbReference type="FunCoup" id="P16919">
    <property type="interactions" value="132"/>
</dbReference>
<dbReference type="IntAct" id="P16919">
    <property type="interactions" value="18"/>
</dbReference>
<dbReference type="STRING" id="511145.b0497"/>
<dbReference type="PaxDb" id="511145-b0497"/>
<dbReference type="EnsemblBacteria" id="AAC73599">
    <property type="protein sequence ID" value="AAC73599"/>
    <property type="gene ID" value="b0497"/>
</dbReference>
<dbReference type="GeneID" id="945116"/>
<dbReference type="KEGG" id="ecj:JW0486"/>
<dbReference type="KEGG" id="eco:b0497"/>
<dbReference type="KEGG" id="ecoc:C3026_02445"/>
<dbReference type="PATRIC" id="fig|1411691.4.peg.1779"/>
<dbReference type="EchoBASE" id="EB0842"/>
<dbReference type="eggNOG" id="COG3209">
    <property type="taxonomic scope" value="Bacteria"/>
</dbReference>
<dbReference type="HOGENOM" id="CLU_001218_0_1_6"/>
<dbReference type="InParanoid" id="P16919"/>
<dbReference type="OMA" id="LEVRYEW"/>
<dbReference type="OrthoDB" id="6043530at2"/>
<dbReference type="PhylomeDB" id="P16919"/>
<dbReference type="BioCyc" id="EcoCyc:EG10849-MONOMER"/>
<dbReference type="PRO" id="PR:P16919"/>
<dbReference type="Proteomes" id="UP000000625">
    <property type="component" value="Chromosome"/>
</dbReference>
<dbReference type="GO" id="GO:0010438">
    <property type="term" value="P:cellular response to sulfur starvation"/>
    <property type="evidence" value="ECO:0000270"/>
    <property type="project" value="EcoCyc"/>
</dbReference>
<dbReference type="FunFam" id="2.180.10.10:FF:000018">
    <property type="entry name" value="Protein rhsD"/>
    <property type="match status" value="1"/>
</dbReference>
<dbReference type="Gene3D" id="2.180.10.10">
    <property type="entry name" value="RHS repeat-associated core"/>
    <property type="match status" value="2"/>
</dbReference>
<dbReference type="InterPro" id="IPR025479">
    <property type="entry name" value="DUF4329"/>
</dbReference>
<dbReference type="InterPro" id="IPR045351">
    <property type="entry name" value="DUF6531"/>
</dbReference>
<dbReference type="InterPro" id="IPR001826">
    <property type="entry name" value="RHS"/>
</dbReference>
<dbReference type="InterPro" id="IPR022385">
    <property type="entry name" value="Rhs_assc_core"/>
</dbReference>
<dbReference type="InterPro" id="IPR053422">
    <property type="entry name" value="RHS_domain"/>
</dbReference>
<dbReference type="InterPro" id="IPR031325">
    <property type="entry name" value="RHS_repeat"/>
</dbReference>
<dbReference type="InterPro" id="IPR050708">
    <property type="entry name" value="T6SS_VgrG/RHS"/>
</dbReference>
<dbReference type="InterPro" id="IPR006530">
    <property type="entry name" value="YD"/>
</dbReference>
<dbReference type="NCBIfam" id="TIGR03696">
    <property type="entry name" value="Rhs_assc_core"/>
    <property type="match status" value="1"/>
</dbReference>
<dbReference type="NCBIfam" id="NF041261">
    <property type="entry name" value="RHS_core"/>
    <property type="match status" value="1"/>
</dbReference>
<dbReference type="NCBIfam" id="TIGR01643">
    <property type="entry name" value="YD_repeat_2x"/>
    <property type="match status" value="7"/>
</dbReference>
<dbReference type="PANTHER" id="PTHR32305">
    <property type="match status" value="1"/>
</dbReference>
<dbReference type="PANTHER" id="PTHR32305:SF15">
    <property type="entry name" value="PROTEIN RHSA-RELATED"/>
    <property type="match status" value="1"/>
</dbReference>
<dbReference type="Pfam" id="PF14220">
    <property type="entry name" value="DUF4329"/>
    <property type="match status" value="1"/>
</dbReference>
<dbReference type="Pfam" id="PF20148">
    <property type="entry name" value="DUF6531"/>
    <property type="match status" value="1"/>
</dbReference>
<dbReference type="Pfam" id="PF03527">
    <property type="entry name" value="RHS"/>
    <property type="match status" value="1"/>
</dbReference>
<dbReference type="Pfam" id="PF05593">
    <property type="entry name" value="RHS_repeat"/>
    <property type="match status" value="6"/>
</dbReference>
<dbReference type="PRINTS" id="PR00394">
    <property type="entry name" value="RHSPROTEIN"/>
</dbReference>
<evidence type="ECO:0000256" key="1">
    <source>
        <dbReference type="SAM" id="MobiDB-lite"/>
    </source>
</evidence>
<evidence type="ECO:0000269" key="2">
    <source>
    </source>
</evidence>
<evidence type="ECO:0000305" key="3"/>
<evidence type="ECO:0000305" key="4">
    <source>
    </source>
</evidence>
<organism>
    <name type="scientific">Escherichia coli (strain K12)</name>
    <dbReference type="NCBI Taxonomy" id="83333"/>
    <lineage>
        <taxon>Bacteria</taxon>
        <taxon>Pseudomonadati</taxon>
        <taxon>Pseudomonadota</taxon>
        <taxon>Gammaproteobacteria</taxon>
        <taxon>Enterobacterales</taxon>
        <taxon>Enterobacteriaceae</taxon>
        <taxon>Escherichia</taxon>
    </lineage>
</organism>
<accession>P16919</accession>
<accession>P77232</accession>
<accession>Q2MBT0</accession>
<gene>
    <name type="primary">rhsD</name>
    <name type="ordered locus">b0497</name>
    <name type="ordered locus">JW0486</name>
</gene>
<feature type="chain" id="PRO_0000022228" description="Protein RhsD">
    <location>
        <begin position="1"/>
        <end position="1426"/>
    </location>
</feature>
<feature type="repeat" description="1" evidence="4">
    <location>
        <begin position="334"/>
        <end position="356"/>
    </location>
</feature>
<feature type="repeat" description="2" evidence="4">
    <location>
        <begin position="357"/>
        <end position="378"/>
    </location>
</feature>
<feature type="repeat" description="3" evidence="4">
    <location>
        <begin position="379"/>
        <end position="421"/>
    </location>
</feature>
<feature type="repeat" description="4" evidence="4">
    <location>
        <begin position="422"/>
        <end position="442"/>
    </location>
</feature>
<feature type="repeat" description="5" evidence="4">
    <location>
        <begin position="443"/>
        <end position="464"/>
    </location>
</feature>
<feature type="repeat" description="6" evidence="4">
    <location>
        <begin position="465"/>
        <end position="485"/>
    </location>
</feature>
<feature type="repeat" description="7" evidence="4">
    <location>
        <begin position="486"/>
        <end position="506"/>
    </location>
</feature>
<feature type="repeat" description="8" evidence="4">
    <location>
        <begin position="507"/>
        <end position="529"/>
    </location>
</feature>
<feature type="repeat" description="9" evidence="4">
    <location>
        <begin position="530"/>
        <end position="550"/>
    </location>
</feature>
<feature type="repeat" description="10" evidence="4">
    <location>
        <begin position="551"/>
        <end position="571"/>
    </location>
</feature>
<feature type="repeat" description="11" evidence="4">
    <location>
        <begin position="572"/>
        <end position="592"/>
    </location>
</feature>
<feature type="repeat" description="12" evidence="4">
    <location>
        <begin position="593"/>
        <end position="613"/>
    </location>
</feature>
<feature type="repeat" description="13" evidence="4">
    <location>
        <begin position="614"/>
        <end position="633"/>
    </location>
</feature>
<feature type="repeat" description="14" evidence="4">
    <location>
        <begin position="634"/>
        <end position="654"/>
    </location>
</feature>
<feature type="repeat" description="15" evidence="4">
    <location>
        <begin position="655"/>
        <end position="675"/>
    </location>
</feature>
<feature type="repeat" description="16" evidence="4">
    <location>
        <begin position="676"/>
        <end position="695"/>
    </location>
</feature>
<feature type="repeat" description="17" evidence="4">
    <location>
        <begin position="696"/>
        <end position="715"/>
    </location>
</feature>
<feature type="repeat" description="18" evidence="4">
    <location>
        <begin position="716"/>
        <end position="738"/>
    </location>
</feature>
<feature type="repeat" description="19" evidence="4">
    <location>
        <begin position="739"/>
        <end position="762"/>
    </location>
</feature>
<feature type="repeat" description="20" evidence="4">
    <location>
        <begin position="812"/>
        <end position="832"/>
    </location>
</feature>
<feature type="repeat" description="21" evidence="4">
    <location>
        <begin position="833"/>
        <end position="861"/>
    </location>
</feature>
<feature type="repeat" description="22" evidence="4">
    <location>
        <begin position="862"/>
        <end position="882"/>
    </location>
</feature>
<feature type="repeat" description="23" evidence="4">
    <location>
        <begin position="883"/>
        <end position="905"/>
    </location>
</feature>
<feature type="repeat" description="24" evidence="4">
    <location>
        <begin position="906"/>
        <end position="941"/>
    </location>
</feature>
<feature type="repeat" description="25" evidence="4">
    <location>
        <begin position="942"/>
        <end position="970"/>
    </location>
</feature>
<feature type="repeat" description="26" evidence="4">
    <location>
        <begin position="971"/>
        <end position="995"/>
    </location>
</feature>
<feature type="repeat" description="27" evidence="4">
    <location>
        <begin position="996"/>
        <end position="1030"/>
    </location>
</feature>
<feature type="repeat" description="28" evidence="4">
    <location>
        <begin position="1173"/>
        <end position="1197"/>
    </location>
</feature>
<feature type="region of interest" description="Disordered" evidence="1">
    <location>
        <begin position="256"/>
        <end position="285"/>
    </location>
</feature>
<feature type="region of interest" description="28 X approximate tandem repeats" evidence="4">
    <location>
        <begin position="320"/>
        <end position="1197"/>
    </location>
</feature>
<feature type="region of interest" description="Disordered" evidence="1">
    <location>
        <begin position="1073"/>
        <end position="1097"/>
    </location>
</feature>
<feature type="compositionally biased region" description="Low complexity" evidence="1">
    <location>
        <begin position="262"/>
        <end position="277"/>
    </location>
</feature>
<feature type="compositionally biased region" description="Basic and acidic residues" evidence="1">
    <location>
        <begin position="1073"/>
        <end position="1085"/>
    </location>
</feature>
<name>RHSD_ECOLI</name>
<reference key="1">
    <citation type="journal article" date="1991" name="Nucleic Acids Res.">
        <title>The RhsD-E subfamily of Escherichia coli K-12.</title>
        <authorList>
            <person name="Sadosky A.B."/>
            <person name="Gray J.A."/>
            <person name="Hill C.W."/>
        </authorList>
    </citation>
    <scope>NUCLEOTIDE SEQUENCE [GENOMIC DNA]</scope>
    <source>
        <strain>K12</strain>
    </source>
</reference>
<reference key="2">
    <citation type="submission" date="1997-01" db="EMBL/GenBank/DDBJ databases">
        <title>Sequence of minutes 4-25 of Escherichia coli.</title>
        <authorList>
            <person name="Chung E."/>
            <person name="Allen E."/>
            <person name="Araujo R."/>
            <person name="Aparicio A.M."/>
            <person name="Davis K."/>
            <person name="Duncan M."/>
            <person name="Federspiel N."/>
            <person name="Hyman R."/>
            <person name="Kalman S."/>
            <person name="Komp C."/>
            <person name="Kurdi O."/>
            <person name="Lew H."/>
            <person name="Lin D."/>
            <person name="Namath A."/>
            <person name="Oefner P."/>
            <person name="Roberts D."/>
            <person name="Schramm S."/>
            <person name="Davis R.W."/>
        </authorList>
    </citation>
    <scope>NUCLEOTIDE SEQUENCE [LARGE SCALE GENOMIC DNA]</scope>
    <source>
        <strain>K12 / MG1655 / ATCC 47076</strain>
    </source>
</reference>
<reference key="3">
    <citation type="journal article" date="1997" name="Science">
        <title>The complete genome sequence of Escherichia coli K-12.</title>
        <authorList>
            <person name="Blattner F.R."/>
            <person name="Plunkett G. III"/>
            <person name="Bloch C.A."/>
            <person name="Perna N.T."/>
            <person name="Burland V."/>
            <person name="Riley M."/>
            <person name="Collado-Vides J."/>
            <person name="Glasner J.D."/>
            <person name="Rode C.K."/>
            <person name="Mayhew G.F."/>
            <person name="Gregor J."/>
            <person name="Davis N.W."/>
            <person name="Kirkpatrick H.A."/>
            <person name="Goeden M.A."/>
            <person name="Rose D.J."/>
            <person name="Mau B."/>
            <person name="Shao Y."/>
        </authorList>
    </citation>
    <scope>NUCLEOTIDE SEQUENCE [LARGE SCALE GENOMIC DNA]</scope>
    <source>
        <strain>K12 / MG1655 / ATCC 47076</strain>
    </source>
</reference>
<reference key="4">
    <citation type="journal article" date="2006" name="Mol. Syst. Biol.">
        <title>Highly accurate genome sequences of Escherichia coli K-12 strains MG1655 and W3110.</title>
        <authorList>
            <person name="Hayashi K."/>
            <person name="Morooka N."/>
            <person name="Yamamoto Y."/>
            <person name="Fujita K."/>
            <person name="Isono K."/>
            <person name="Choi S."/>
            <person name="Ohtsubo E."/>
            <person name="Baba T."/>
            <person name="Wanner B.L."/>
            <person name="Mori H."/>
            <person name="Horiuchi T."/>
        </authorList>
    </citation>
    <scope>NUCLEOTIDE SEQUENCE [LARGE SCALE GENOMIC DNA]</scope>
    <source>
        <strain>K12 / W3110 / ATCC 27325 / DSM 5911</strain>
    </source>
</reference>
<reference key="5">
    <citation type="submission" date="1998-01" db="EMBL/GenBank/DDBJ databases">
        <authorList>
            <person name="Wang Y.-D."/>
            <person name="Zhao S."/>
            <person name="Hill C.W."/>
        </authorList>
    </citation>
    <scope>NUCLEOTIDE SEQUENCE [GENOMIC DNA] OF 1-176</scope>
    <source>
        <strain>EC45</strain>
    </source>
</reference>
<reference key="6">
    <citation type="journal article" date="1989" name="J. Bacteriol.">
        <title>rhs gene family of Escherichia coli K-12.</title>
        <authorList>
            <person name="Sadosky A.B."/>
            <person name="Davidson A."/>
            <person name="Lin R.J."/>
            <person name="Hill C.W."/>
        </authorList>
    </citation>
    <scope>NUCLEOTIDE SEQUENCE [GENOMIC DNA] OF 1-100</scope>
    <source>
        <strain>K12</strain>
    </source>
</reference>
<reference key="7">
    <citation type="journal article" date="1990" name="J. Bacteriol.">
        <title>Structure of the rhsA locus from Escherichia coli K-12 and comparison of rhsA with other members of the rhs multigene family.</title>
        <authorList>
            <person name="Feulner G."/>
            <person name="Gray J.A."/>
            <person name="Kirschman J.A."/>
            <person name="Lehner A.F."/>
            <person name="Sadosky A.B."/>
            <person name="Vlazny D.A."/>
            <person name="Zhang J."/>
            <person name="Zhao S."/>
            <person name="Hill C.W."/>
        </authorList>
    </citation>
    <scope>NUCLEOTIDE SEQUENCE [GENOMIC DNA] OF 1232-1426</scope>
    <source>
        <strain>K12</strain>
    </source>
</reference>
<reference key="8">
    <citation type="journal article" date="2009" name="J. Bacteriol.">
        <title>Involvement of the leucine response transcription factor LeuO in regulation of the genes for sulfa drug efflux.</title>
        <authorList>
            <person name="Shimada T."/>
            <person name="Yamamoto K."/>
            <person name="Ishihama A."/>
        </authorList>
    </citation>
    <scope>OPERON STRUCTURE</scope>
    <scope>INDUCTION</scope>
    <source>
        <strain>K12 / BW25113</strain>
    </source>
</reference>
<reference key="9">
    <citation type="journal article" date="1994" name="Mol. Microbiol.">
        <title>Rhs elements of Escherichia coli: a family of genetic composites each encoding a large mosaic protein.</title>
        <authorList>
            <person name="Hill C.W."/>
            <person name="Sandt C.H."/>
            <person name="Vlazny D.A."/>
        </authorList>
    </citation>
    <scope>REVIEW</scope>
</reference>
<keyword id="KW-1185">Reference proteome</keyword>
<keyword id="KW-0677">Repeat</keyword>